<proteinExistence type="inferred from homology"/>
<feature type="chain" id="PRO_0000047919" description="DNA-directed RNA polymerase subunit beta">
    <location>
        <begin position="1"/>
        <end position="1390"/>
    </location>
</feature>
<feature type="sequence conflict" description="In Ref. 2; AAD10545." evidence="2" ref="2">
    <original>H</original>
    <variation>L</variation>
    <location>
        <position position="1062"/>
    </location>
</feature>
<comment type="function">
    <text evidence="1">DNA-dependent RNA polymerase catalyzes the transcription of DNA into RNA using the four ribonucleoside triphosphates as substrates.</text>
</comment>
<comment type="catalytic activity">
    <reaction evidence="1">
        <text>RNA(n) + a ribonucleoside 5'-triphosphate = RNA(n+1) + diphosphate</text>
        <dbReference type="Rhea" id="RHEA:21248"/>
        <dbReference type="Rhea" id="RHEA-COMP:14527"/>
        <dbReference type="Rhea" id="RHEA-COMP:17342"/>
        <dbReference type="ChEBI" id="CHEBI:33019"/>
        <dbReference type="ChEBI" id="CHEBI:61557"/>
        <dbReference type="ChEBI" id="CHEBI:140395"/>
        <dbReference type="EC" id="2.7.7.6"/>
    </reaction>
</comment>
<comment type="subunit">
    <text evidence="1">The RNAP catalytic core consists of 2 alpha, 1 beta, 1 beta' and 1 omega subunit. When a sigma factor is associated with the core the holoenzyme is formed, which can initiate transcription.</text>
</comment>
<comment type="similarity">
    <text evidence="1">Belongs to the RNA polymerase beta chain family.</text>
</comment>
<accession>P47583</accession>
<accession>Q49439</accession>
<accession>Q49441</accession>
<organism>
    <name type="scientific">Mycoplasma genitalium (strain ATCC 33530 / DSM 19775 / NCTC 10195 / G37)</name>
    <name type="common">Mycoplasmoides genitalium</name>
    <dbReference type="NCBI Taxonomy" id="243273"/>
    <lineage>
        <taxon>Bacteria</taxon>
        <taxon>Bacillati</taxon>
        <taxon>Mycoplasmatota</taxon>
        <taxon>Mycoplasmoidales</taxon>
        <taxon>Mycoplasmoidaceae</taxon>
        <taxon>Mycoplasmoides</taxon>
    </lineage>
</organism>
<gene>
    <name evidence="1" type="primary">rpoB</name>
    <name type="ordered locus">MG341</name>
</gene>
<dbReference type="EC" id="2.7.7.6" evidence="1"/>
<dbReference type="EMBL" id="L43967">
    <property type="protein sequence ID" value="AAC71566.1"/>
    <property type="molecule type" value="Genomic_DNA"/>
</dbReference>
<dbReference type="EMBL" id="U01737">
    <property type="protein sequence ID" value="AAD10547.1"/>
    <property type="molecule type" value="Genomic_DNA"/>
</dbReference>
<dbReference type="EMBL" id="U01735">
    <property type="protein sequence ID" value="AAD10545.1"/>
    <property type="molecule type" value="Genomic_DNA"/>
</dbReference>
<dbReference type="PIR" id="G64237">
    <property type="entry name" value="G64237"/>
</dbReference>
<dbReference type="RefSeq" id="WP_009885798.1">
    <property type="nucleotide sequence ID" value="NC_000908.2"/>
</dbReference>
<dbReference type="SMR" id="P47583"/>
<dbReference type="FunCoup" id="P47583">
    <property type="interactions" value="192"/>
</dbReference>
<dbReference type="STRING" id="243273.MG_341"/>
<dbReference type="GeneID" id="88282518"/>
<dbReference type="KEGG" id="mge:MG_341"/>
<dbReference type="eggNOG" id="COG0085">
    <property type="taxonomic scope" value="Bacteria"/>
</dbReference>
<dbReference type="HOGENOM" id="CLU_000524_4_1_14"/>
<dbReference type="InParanoid" id="P47583"/>
<dbReference type="OrthoDB" id="9803954at2"/>
<dbReference type="BioCyc" id="MGEN243273:G1GJ2-428-MONOMER"/>
<dbReference type="Proteomes" id="UP000000807">
    <property type="component" value="Chromosome"/>
</dbReference>
<dbReference type="GO" id="GO:0000428">
    <property type="term" value="C:DNA-directed RNA polymerase complex"/>
    <property type="evidence" value="ECO:0007669"/>
    <property type="project" value="UniProtKB-KW"/>
</dbReference>
<dbReference type="GO" id="GO:0003677">
    <property type="term" value="F:DNA binding"/>
    <property type="evidence" value="ECO:0007669"/>
    <property type="project" value="UniProtKB-UniRule"/>
</dbReference>
<dbReference type="GO" id="GO:0003899">
    <property type="term" value="F:DNA-directed RNA polymerase activity"/>
    <property type="evidence" value="ECO:0007669"/>
    <property type="project" value="UniProtKB-UniRule"/>
</dbReference>
<dbReference type="GO" id="GO:0032549">
    <property type="term" value="F:ribonucleoside binding"/>
    <property type="evidence" value="ECO:0007669"/>
    <property type="project" value="InterPro"/>
</dbReference>
<dbReference type="GO" id="GO:0006351">
    <property type="term" value="P:DNA-templated transcription"/>
    <property type="evidence" value="ECO:0007669"/>
    <property type="project" value="UniProtKB-UniRule"/>
</dbReference>
<dbReference type="CDD" id="cd00653">
    <property type="entry name" value="RNA_pol_B_RPB2"/>
    <property type="match status" value="1"/>
</dbReference>
<dbReference type="Gene3D" id="2.40.50.100">
    <property type="match status" value="1"/>
</dbReference>
<dbReference type="Gene3D" id="2.40.50.150">
    <property type="match status" value="1"/>
</dbReference>
<dbReference type="Gene3D" id="3.90.1100.10">
    <property type="match status" value="2"/>
</dbReference>
<dbReference type="Gene3D" id="2.30.150.10">
    <property type="entry name" value="DNA-directed RNA polymerase, beta subunit, external 1 domain"/>
    <property type="match status" value="1"/>
</dbReference>
<dbReference type="Gene3D" id="2.40.270.10">
    <property type="entry name" value="DNA-directed RNA polymerase, subunit 2, domain 6"/>
    <property type="match status" value="2"/>
</dbReference>
<dbReference type="Gene3D" id="3.90.1800.10">
    <property type="entry name" value="RNA polymerase alpha subunit dimerisation domain"/>
    <property type="match status" value="1"/>
</dbReference>
<dbReference type="Gene3D" id="3.90.1110.10">
    <property type="entry name" value="RNA polymerase Rpb2, domain 2"/>
    <property type="match status" value="2"/>
</dbReference>
<dbReference type="HAMAP" id="MF_01321">
    <property type="entry name" value="RNApol_bact_RpoB"/>
    <property type="match status" value="1"/>
</dbReference>
<dbReference type="InterPro" id="IPR042107">
    <property type="entry name" value="DNA-dir_RNA_pol_bsu_ext_1_sf"/>
</dbReference>
<dbReference type="InterPro" id="IPR019462">
    <property type="entry name" value="DNA-dir_RNA_pol_bsu_external_1"/>
</dbReference>
<dbReference type="InterPro" id="IPR015712">
    <property type="entry name" value="DNA-dir_RNA_pol_su2"/>
</dbReference>
<dbReference type="InterPro" id="IPR007120">
    <property type="entry name" value="DNA-dir_RNAP_su2_dom"/>
</dbReference>
<dbReference type="InterPro" id="IPR037033">
    <property type="entry name" value="DNA-dir_RNAP_su2_hyb_sf"/>
</dbReference>
<dbReference type="InterPro" id="IPR010243">
    <property type="entry name" value="RNA_pol_bsu_bac"/>
</dbReference>
<dbReference type="InterPro" id="IPR007121">
    <property type="entry name" value="RNA_pol_bsu_CS"/>
</dbReference>
<dbReference type="InterPro" id="IPR007644">
    <property type="entry name" value="RNA_pol_bsu_protrusion"/>
</dbReference>
<dbReference type="InterPro" id="IPR007642">
    <property type="entry name" value="RNA_pol_Rpb2_2"/>
</dbReference>
<dbReference type="InterPro" id="IPR037034">
    <property type="entry name" value="RNA_pol_Rpb2_2_sf"/>
</dbReference>
<dbReference type="InterPro" id="IPR007645">
    <property type="entry name" value="RNA_pol_Rpb2_3"/>
</dbReference>
<dbReference type="InterPro" id="IPR007641">
    <property type="entry name" value="RNA_pol_Rpb2_7"/>
</dbReference>
<dbReference type="InterPro" id="IPR014724">
    <property type="entry name" value="RNA_pol_RPB2_OB-fold"/>
</dbReference>
<dbReference type="NCBIfam" id="NF001616">
    <property type="entry name" value="PRK00405.1"/>
    <property type="match status" value="1"/>
</dbReference>
<dbReference type="NCBIfam" id="TIGR02013">
    <property type="entry name" value="rpoB"/>
    <property type="match status" value="1"/>
</dbReference>
<dbReference type="PANTHER" id="PTHR20856">
    <property type="entry name" value="DNA-DIRECTED RNA POLYMERASE I SUBUNIT 2"/>
    <property type="match status" value="1"/>
</dbReference>
<dbReference type="Pfam" id="PF04563">
    <property type="entry name" value="RNA_pol_Rpb2_1"/>
    <property type="match status" value="1"/>
</dbReference>
<dbReference type="Pfam" id="PF04561">
    <property type="entry name" value="RNA_pol_Rpb2_2"/>
    <property type="match status" value="1"/>
</dbReference>
<dbReference type="Pfam" id="PF04565">
    <property type="entry name" value="RNA_pol_Rpb2_3"/>
    <property type="match status" value="1"/>
</dbReference>
<dbReference type="Pfam" id="PF10385">
    <property type="entry name" value="RNA_pol_Rpb2_45"/>
    <property type="match status" value="1"/>
</dbReference>
<dbReference type="Pfam" id="PF00562">
    <property type="entry name" value="RNA_pol_Rpb2_6"/>
    <property type="match status" value="1"/>
</dbReference>
<dbReference type="Pfam" id="PF04560">
    <property type="entry name" value="RNA_pol_Rpb2_7"/>
    <property type="match status" value="1"/>
</dbReference>
<dbReference type="SUPFAM" id="SSF64484">
    <property type="entry name" value="beta and beta-prime subunits of DNA dependent RNA-polymerase"/>
    <property type="match status" value="1"/>
</dbReference>
<dbReference type="PROSITE" id="PS01166">
    <property type="entry name" value="RNA_POL_BETA"/>
    <property type="match status" value="1"/>
</dbReference>
<reference key="1">
    <citation type="journal article" date="1995" name="Science">
        <title>The minimal gene complement of Mycoplasma genitalium.</title>
        <authorList>
            <person name="Fraser C.M."/>
            <person name="Gocayne J.D."/>
            <person name="White O."/>
            <person name="Adams M.D."/>
            <person name="Clayton R.A."/>
            <person name="Fleischmann R.D."/>
            <person name="Bult C.J."/>
            <person name="Kerlavage A.R."/>
            <person name="Sutton G.G."/>
            <person name="Kelley J.M."/>
            <person name="Fritchman J.L."/>
            <person name="Weidman J.F."/>
            <person name="Small K.V."/>
            <person name="Sandusky M."/>
            <person name="Fuhrmann J.L."/>
            <person name="Nguyen D.T."/>
            <person name="Utterback T.R."/>
            <person name="Saudek D.M."/>
            <person name="Phillips C.A."/>
            <person name="Merrick J.M."/>
            <person name="Tomb J.-F."/>
            <person name="Dougherty B.A."/>
            <person name="Bott K.F."/>
            <person name="Hu P.-C."/>
            <person name="Lucier T.S."/>
            <person name="Peterson S.N."/>
            <person name="Smith H.O."/>
            <person name="Hutchison C.A. III"/>
            <person name="Venter J.C."/>
        </authorList>
    </citation>
    <scope>NUCLEOTIDE SEQUENCE [LARGE SCALE GENOMIC DNA]</scope>
    <source>
        <strain>ATCC 33530 / DSM 19775 / NCTC 10195 / G37</strain>
    </source>
</reference>
<reference key="2">
    <citation type="journal article" date="1993" name="J. Bacteriol.">
        <title>A survey of the Mycoplasma genitalium genome by using random sequencing.</title>
        <authorList>
            <person name="Peterson S.N."/>
            <person name="Hu P.-C."/>
            <person name="Bott K.F."/>
            <person name="Hutchison C.A. III"/>
        </authorList>
    </citation>
    <scope>NUCLEOTIDE SEQUENCE [GENOMIC DNA] OF 533-644 AND 945-1067</scope>
    <source>
        <strain>ATCC 33530 / DSM 19775 / NCTC 10195 / G37</strain>
    </source>
</reference>
<name>RPOB_MYCGE</name>
<protein>
    <recommendedName>
        <fullName evidence="1">DNA-directed RNA polymerase subunit beta</fullName>
        <shortName evidence="1">RNAP subunit beta</shortName>
        <ecNumber evidence="1">2.7.7.6</ecNumber>
    </recommendedName>
    <alternativeName>
        <fullName evidence="1">RNA polymerase subunit beta</fullName>
    </alternativeName>
    <alternativeName>
        <fullName evidence="1">Transcriptase subunit beta</fullName>
    </alternativeName>
</protein>
<evidence type="ECO:0000255" key="1">
    <source>
        <dbReference type="HAMAP-Rule" id="MF_01321"/>
    </source>
</evidence>
<evidence type="ECO:0000305" key="2"/>
<sequence>MSQKSNFFQKRYSPTATRRYYGKIETNFIQPNLADIQIKSYQKFLDHDLEKLIASYFPIKSPNDRYTINFRGLHRTEPERDEAQSRAQSKTYEVGIYADLELVDNDKGTVKKARKSKKNIASNTNGVFLASMPLITHDGVFIINGIEKFVISQITRSPGIYMLTKSQLKLSNSRKRVQEGYVCEVLPANGSVMLIYISNKKKIEDAFVQILLRDAVREGAKIFPITTLLKAFGLNNREILKIFKNNEFIKRSLEAEIYNAKDFLSNVDPEIKNLLKEFRDGKTDLRRKGIASDQKLRSLVNEYVTLEKQYNALKQTSPNDSSLTALELEMENKMDSVITERAAKHIVNELSISLRDIENTEECHEVSFHALLCARFFRNKRYNLSNAGRYKVSRKLRLTERIYQKTLACDLFLKDGKLLLKKGTLLLKEEIDKIKQAAKNNEISFVNKMQLTTDGKAVDLAKESLFYETIDVYITNDNLSVSVPVIGIHNENDLNKAMTLSDFIASISYVINLPYGIGKYDDIDHLGNKRVKLINELITAKLESGFTRMERFLKEKLTIADGVNRGQQINEEGQVIEQGEKKELTIKSLINSKPIQIVIKDFFNTHQLTQFLDHQNPLSELSNKRRISAMGPGGISREDPNLDIRDVHYSQYGRICPIETPEGMNIGLIMSLASFAKIDENGFLMAPYRKIKAGVITDEVEYLTALREDEHIIAEISSLVNISNDNKILDKEIIGRYRSMQGLYDPLKIDYIDVAPHQVVSIGSSLIPFLENDDSARALMGTNMQRQAYPLIKPYAPAVGTGQEHKIASDSGLTMSSPCSGVVSYVDNSKIIITSDSSKKETVNLVKFERSNQNTCYNHKPIVEIGQRVNKDEIIVDGPAVNKSELALGQNVLVAFTTWNGYNYEDAIVISERLVKEDILTSLTINEYVAQCLSTKNGDEQITRDIPNVSDANKRYLDENGIIMVGAEVKEGDVLVGKVSPKGQVEVSPEEKLFKAIFPESVQNVRDSSLKVSHGGDGIVSAVKRFSIANGDELNDGVIEMIKVYVVQKRKIQIGDKLAGRHGNKGVISKVVPIEDMPHLEDGTPVDILLNPLGVPSRMNIGQIFETHLGYAAHKLAVRSLISSCFDQNKAKEFAIEINQPQARVERLIKGLKNQINDRNIKSEKEALEKLDNSDISLVLKEIGMSFDDLIYKIATPIFQGVNFLDLQDVMQEAGLDPQKNQGKFKLIDGRSGMPFERPISLGIMYMMKLNHMVDDKIHARAVGPYSKITQQPLGGKSQNGGQRFGEMEVWALEAYGAAYNLQELLTIKSDDVQGRNRAYAAIVKGAAFPEPGIPESFKLLTKELQGLALSVSFIYDDNTQQDSNNVSILQSDGEQDEFFNDFEFDTEGY</sequence>
<keyword id="KW-0240">DNA-directed RNA polymerase</keyword>
<keyword id="KW-0548">Nucleotidyltransferase</keyword>
<keyword id="KW-1185">Reference proteome</keyword>
<keyword id="KW-0804">Transcription</keyword>
<keyword id="KW-0808">Transferase</keyword>